<proteinExistence type="inferred from homology"/>
<accession>B1JK18</accession>
<organism>
    <name type="scientific">Yersinia pseudotuberculosis serotype O:3 (strain YPIII)</name>
    <dbReference type="NCBI Taxonomy" id="502800"/>
    <lineage>
        <taxon>Bacteria</taxon>
        <taxon>Pseudomonadati</taxon>
        <taxon>Pseudomonadota</taxon>
        <taxon>Gammaproteobacteria</taxon>
        <taxon>Enterobacterales</taxon>
        <taxon>Yersiniaceae</taxon>
        <taxon>Yersinia</taxon>
    </lineage>
</organism>
<name>BTUF_YERPY</name>
<evidence type="ECO:0000255" key="1">
    <source>
        <dbReference type="HAMAP-Rule" id="MF_01000"/>
    </source>
</evidence>
<protein>
    <recommendedName>
        <fullName evidence="1">Vitamin B12-binding protein</fullName>
    </recommendedName>
</protein>
<keyword id="KW-1015">Disulfide bond</keyword>
<keyword id="KW-0574">Periplasm</keyword>
<keyword id="KW-0732">Signal</keyword>
<keyword id="KW-0813">Transport</keyword>
<gene>
    <name evidence="1" type="primary">btuF</name>
    <name type="ordered locus">YPK_3455</name>
</gene>
<reference key="1">
    <citation type="submission" date="2008-02" db="EMBL/GenBank/DDBJ databases">
        <title>Complete sequence of Yersinia pseudotuberculosis YPIII.</title>
        <authorList>
            <consortium name="US DOE Joint Genome Institute"/>
            <person name="Copeland A."/>
            <person name="Lucas S."/>
            <person name="Lapidus A."/>
            <person name="Glavina del Rio T."/>
            <person name="Dalin E."/>
            <person name="Tice H."/>
            <person name="Bruce D."/>
            <person name="Goodwin L."/>
            <person name="Pitluck S."/>
            <person name="Munk A.C."/>
            <person name="Brettin T."/>
            <person name="Detter J.C."/>
            <person name="Han C."/>
            <person name="Tapia R."/>
            <person name="Schmutz J."/>
            <person name="Larimer F."/>
            <person name="Land M."/>
            <person name="Hauser L."/>
            <person name="Challacombe J.F."/>
            <person name="Green L."/>
            <person name="Lindler L.E."/>
            <person name="Nikolich M.P."/>
            <person name="Richardson P."/>
        </authorList>
    </citation>
    <scope>NUCLEOTIDE SEQUENCE [LARGE SCALE GENOMIC DNA]</scope>
    <source>
        <strain>YPIII</strain>
    </source>
</reference>
<sequence length="280" mass="30841">MMPLGLFPLPRAAAVLLISLLTLPAQAAERVISLSPSTTELAYAAGLGDKLVAVSAYSDYPESAKKLEHVASWQGINVERILALKPDLILAWRGGNPQRPLDQLAALGIPIFYSDPTHIDQIASDLDKLAQYSPHPEQAHQAAEQFRQHVNTLRDRYARSQPKRTFLQFGTQPLFTSSGHTLQSEVVSLCGGENIFADSRVPWPQVSRERVMTRKPQVIVVSGTQSQVDNVSAFWLPQLVVPVIALNEDWFNRASPRILLAAQQLCQQMASIPTPVAESH</sequence>
<dbReference type="EMBL" id="CP000950">
    <property type="protein sequence ID" value="ACA69722.1"/>
    <property type="molecule type" value="Genomic_DNA"/>
</dbReference>
<dbReference type="RefSeq" id="WP_012304565.1">
    <property type="nucleotide sequence ID" value="NZ_CP009792.1"/>
</dbReference>
<dbReference type="SMR" id="B1JK18"/>
<dbReference type="KEGG" id="ypy:YPK_3455"/>
<dbReference type="GO" id="GO:0042597">
    <property type="term" value="C:periplasmic space"/>
    <property type="evidence" value="ECO:0007669"/>
    <property type="project" value="UniProtKB-SubCell"/>
</dbReference>
<dbReference type="GO" id="GO:0031419">
    <property type="term" value="F:cobalamin binding"/>
    <property type="evidence" value="ECO:0007669"/>
    <property type="project" value="InterPro"/>
</dbReference>
<dbReference type="GO" id="GO:0015889">
    <property type="term" value="P:cobalamin transport"/>
    <property type="evidence" value="ECO:0007669"/>
    <property type="project" value="UniProtKB-UniRule"/>
</dbReference>
<dbReference type="CDD" id="cd01144">
    <property type="entry name" value="BtuF"/>
    <property type="match status" value="1"/>
</dbReference>
<dbReference type="Gene3D" id="3.40.50.1980">
    <property type="entry name" value="Nitrogenase molybdenum iron protein domain"/>
    <property type="match status" value="2"/>
</dbReference>
<dbReference type="HAMAP" id="MF_01000">
    <property type="entry name" value="BtuF"/>
    <property type="match status" value="1"/>
</dbReference>
<dbReference type="InterPro" id="IPR002491">
    <property type="entry name" value="ABC_transptr_periplasmic_BD"/>
</dbReference>
<dbReference type="InterPro" id="IPR023544">
    <property type="entry name" value="ABC_transptr_vit_B12-bd"/>
</dbReference>
<dbReference type="InterPro" id="IPR054828">
    <property type="entry name" value="Vit_B12_bind_prot"/>
</dbReference>
<dbReference type="InterPro" id="IPR051030">
    <property type="entry name" value="Vitamin_B12-ABC_binding"/>
</dbReference>
<dbReference type="NCBIfam" id="NF002894">
    <property type="entry name" value="PRK03379.1"/>
    <property type="match status" value="1"/>
</dbReference>
<dbReference type="NCBIfam" id="NF038402">
    <property type="entry name" value="TroA_like"/>
    <property type="match status" value="1"/>
</dbReference>
<dbReference type="PANTHER" id="PTHR42860">
    <property type="entry name" value="VITAMIN B12-BINDING PROTEIN"/>
    <property type="match status" value="1"/>
</dbReference>
<dbReference type="PANTHER" id="PTHR42860:SF1">
    <property type="entry name" value="VITAMIN B12-BINDING PROTEIN"/>
    <property type="match status" value="1"/>
</dbReference>
<dbReference type="Pfam" id="PF01497">
    <property type="entry name" value="Peripla_BP_2"/>
    <property type="match status" value="1"/>
</dbReference>
<dbReference type="SUPFAM" id="SSF53807">
    <property type="entry name" value="Helical backbone' metal receptor"/>
    <property type="match status" value="1"/>
</dbReference>
<dbReference type="PROSITE" id="PS50983">
    <property type="entry name" value="FE_B12_PBP"/>
    <property type="match status" value="1"/>
</dbReference>
<feature type="signal peptide" evidence="1">
    <location>
        <begin position="1"/>
        <end position="27"/>
    </location>
</feature>
<feature type="chain" id="PRO_5000315802" description="Vitamin B12-binding protein">
    <location>
        <begin position="28"/>
        <end position="280"/>
    </location>
</feature>
<feature type="domain" description="Fe/B12 periplasmic-binding" evidence="1">
    <location>
        <begin position="30"/>
        <end position="277"/>
    </location>
</feature>
<feature type="binding site" evidence="1">
    <location>
        <position position="57"/>
    </location>
    <ligand>
        <name>cyanocob(III)alamin</name>
        <dbReference type="ChEBI" id="CHEBI:17439"/>
    </ligand>
</feature>
<feature type="site" description="Important for BtuC binding" evidence="1">
    <location>
        <position position="79"/>
    </location>
</feature>
<feature type="site" description="Important for BtuC binding" evidence="1">
    <location>
        <position position="209"/>
    </location>
</feature>
<feature type="disulfide bond" evidence="1">
    <location>
        <begin position="190"/>
        <end position="266"/>
    </location>
</feature>
<comment type="function">
    <text evidence="1">Part of the ABC transporter complex BtuCDF involved in vitamin B12 import. Binds vitamin B12 and delivers it to the periplasmic surface of BtuC.</text>
</comment>
<comment type="subunit">
    <text evidence="1">The complex is composed of two ATP-binding proteins (BtuD), two transmembrane proteins (BtuC) and a solute-binding protein (BtuF).</text>
</comment>
<comment type="subcellular location">
    <subcellularLocation>
        <location evidence="1">Periplasm</location>
    </subcellularLocation>
</comment>
<comment type="similarity">
    <text evidence="1">Belongs to the BtuF family.</text>
</comment>